<accession>Q9W2C3</accession>
<protein>
    <recommendedName>
        <fullName>L-asparaginase-like protein CG4372</fullName>
    </recommendedName>
</protein>
<proteinExistence type="inferred from homology"/>
<keyword id="KW-1015">Disulfide bond</keyword>
<keyword id="KW-1185">Reference proteome</keyword>
<keyword id="KW-0732">Signal</keyword>
<organism>
    <name type="scientific">Drosophila melanogaster</name>
    <name type="common">Fruit fly</name>
    <dbReference type="NCBI Taxonomy" id="7227"/>
    <lineage>
        <taxon>Eukaryota</taxon>
        <taxon>Metazoa</taxon>
        <taxon>Ecdysozoa</taxon>
        <taxon>Arthropoda</taxon>
        <taxon>Hexapoda</taxon>
        <taxon>Insecta</taxon>
        <taxon>Pterygota</taxon>
        <taxon>Neoptera</taxon>
        <taxon>Endopterygota</taxon>
        <taxon>Diptera</taxon>
        <taxon>Brachycera</taxon>
        <taxon>Muscomorpha</taxon>
        <taxon>Ephydroidea</taxon>
        <taxon>Drosophilidae</taxon>
        <taxon>Drosophila</taxon>
        <taxon>Sophophora</taxon>
    </lineage>
</organism>
<evidence type="ECO:0000250" key="1"/>
<evidence type="ECO:0000250" key="2">
    <source>
        <dbReference type="UniProtKB" id="P20933"/>
    </source>
</evidence>
<evidence type="ECO:0000255" key="3"/>
<evidence type="ECO:0000312" key="4">
    <source>
        <dbReference type="EMBL" id="AAF46769.2"/>
    </source>
</evidence>
<dbReference type="EMBL" id="AE013599">
    <property type="protein sequence ID" value="AAF46769.2"/>
    <property type="molecule type" value="Genomic_DNA"/>
</dbReference>
<dbReference type="RefSeq" id="NP_611615.1">
    <property type="nucleotide sequence ID" value="NM_137771.1"/>
</dbReference>
<dbReference type="SMR" id="Q9W2C3"/>
<dbReference type="FunCoup" id="Q9W2C3">
    <property type="interactions" value="125"/>
</dbReference>
<dbReference type="STRING" id="7227.FBpp0071652"/>
<dbReference type="MEROPS" id="T02.A04"/>
<dbReference type="PaxDb" id="7227-FBpp0071652"/>
<dbReference type="EnsemblMetazoa" id="FBtr0071738">
    <property type="protein sequence ID" value="FBpp0071652"/>
    <property type="gene ID" value="FBgn0034665"/>
</dbReference>
<dbReference type="GeneID" id="37490"/>
<dbReference type="KEGG" id="dme:Dmel_CG4372"/>
<dbReference type="UCSC" id="CG4372-RA">
    <property type="organism name" value="d. melanogaster"/>
</dbReference>
<dbReference type="AGR" id="FB:FBgn0034665"/>
<dbReference type="FlyBase" id="FBgn0034665">
    <property type="gene designation" value="CG4372"/>
</dbReference>
<dbReference type="VEuPathDB" id="VectorBase:FBgn0034665"/>
<dbReference type="eggNOG" id="KOG1593">
    <property type="taxonomic scope" value="Eukaryota"/>
</dbReference>
<dbReference type="GeneTree" id="ENSGT00950000183045"/>
<dbReference type="HOGENOM" id="CLU_021603_0_0_1"/>
<dbReference type="InParanoid" id="Q9W2C3"/>
<dbReference type="OMA" id="QAVIQGC"/>
<dbReference type="OrthoDB" id="188713at2759"/>
<dbReference type="PhylomeDB" id="Q9W2C3"/>
<dbReference type="BioGRID-ORCS" id="37490">
    <property type="hits" value="0 hits in 1 CRISPR screen"/>
</dbReference>
<dbReference type="GenomeRNAi" id="37490"/>
<dbReference type="PRO" id="PR:Q9W2C3"/>
<dbReference type="Proteomes" id="UP000000803">
    <property type="component" value="Chromosome 2R"/>
</dbReference>
<dbReference type="Bgee" id="FBgn0034665">
    <property type="expression patterns" value="Expressed in seminal fluid secreting gland"/>
</dbReference>
<dbReference type="GO" id="GO:0005737">
    <property type="term" value="C:cytoplasm"/>
    <property type="evidence" value="ECO:0000318"/>
    <property type="project" value="GO_Central"/>
</dbReference>
<dbReference type="GO" id="GO:0005764">
    <property type="term" value="C:lysosome"/>
    <property type="evidence" value="ECO:0000318"/>
    <property type="project" value="GO_Central"/>
</dbReference>
<dbReference type="GO" id="GO:0003948">
    <property type="term" value="F:N4-(beta-N-acetylglucosaminyl)-L-asparaginase activity"/>
    <property type="evidence" value="ECO:0000318"/>
    <property type="project" value="GO_Central"/>
</dbReference>
<dbReference type="CDD" id="cd04513">
    <property type="entry name" value="Glycosylasparaginase"/>
    <property type="match status" value="1"/>
</dbReference>
<dbReference type="Gene3D" id="3.60.20.30">
    <property type="entry name" value="(Glycosyl)asparaginase"/>
    <property type="match status" value="1"/>
</dbReference>
<dbReference type="InterPro" id="IPR029055">
    <property type="entry name" value="Ntn_hydrolases_N"/>
</dbReference>
<dbReference type="InterPro" id="IPR000246">
    <property type="entry name" value="Peptidase_T2"/>
</dbReference>
<dbReference type="PANTHER" id="PTHR10188">
    <property type="entry name" value="L-ASPARAGINASE"/>
    <property type="match status" value="1"/>
</dbReference>
<dbReference type="PANTHER" id="PTHR10188:SF6">
    <property type="entry name" value="N(4)-(BETA-N-ACETYLGLUCOSAMINYL)-L-ASPARAGINASE"/>
    <property type="match status" value="1"/>
</dbReference>
<dbReference type="Pfam" id="PF01112">
    <property type="entry name" value="Asparaginase_2"/>
    <property type="match status" value="1"/>
</dbReference>
<dbReference type="SUPFAM" id="SSF56235">
    <property type="entry name" value="N-terminal nucleophile aminohydrolases (Ntn hydrolases)"/>
    <property type="match status" value="1"/>
</dbReference>
<comment type="similarity">
    <text evidence="3">Belongs to the Ntn-hydrolase family.</text>
</comment>
<reference evidence="4" key="1">
    <citation type="journal article" date="2000" name="Science">
        <title>The genome sequence of Drosophila melanogaster.</title>
        <authorList>
            <person name="Adams M.D."/>
            <person name="Celniker S.E."/>
            <person name="Holt R.A."/>
            <person name="Evans C.A."/>
            <person name="Gocayne J.D."/>
            <person name="Amanatides P.G."/>
            <person name="Scherer S.E."/>
            <person name="Li P.W."/>
            <person name="Hoskins R.A."/>
            <person name="Galle R.F."/>
            <person name="George R.A."/>
            <person name="Lewis S.E."/>
            <person name="Richards S."/>
            <person name="Ashburner M."/>
            <person name="Henderson S.N."/>
            <person name="Sutton G.G."/>
            <person name="Wortman J.R."/>
            <person name="Yandell M.D."/>
            <person name="Zhang Q."/>
            <person name="Chen L.X."/>
            <person name="Brandon R.C."/>
            <person name="Rogers Y.-H.C."/>
            <person name="Blazej R.G."/>
            <person name="Champe M."/>
            <person name="Pfeiffer B.D."/>
            <person name="Wan K.H."/>
            <person name="Doyle C."/>
            <person name="Baxter E.G."/>
            <person name="Helt G."/>
            <person name="Nelson C.R."/>
            <person name="Miklos G.L.G."/>
            <person name="Abril J.F."/>
            <person name="Agbayani A."/>
            <person name="An H.-J."/>
            <person name="Andrews-Pfannkoch C."/>
            <person name="Baldwin D."/>
            <person name="Ballew R.M."/>
            <person name="Basu A."/>
            <person name="Baxendale J."/>
            <person name="Bayraktaroglu L."/>
            <person name="Beasley E.M."/>
            <person name="Beeson K.Y."/>
            <person name="Benos P.V."/>
            <person name="Berman B.P."/>
            <person name="Bhandari D."/>
            <person name="Bolshakov S."/>
            <person name="Borkova D."/>
            <person name="Botchan M.R."/>
            <person name="Bouck J."/>
            <person name="Brokstein P."/>
            <person name="Brottier P."/>
            <person name="Burtis K.C."/>
            <person name="Busam D.A."/>
            <person name="Butler H."/>
            <person name="Cadieu E."/>
            <person name="Center A."/>
            <person name="Chandra I."/>
            <person name="Cherry J.M."/>
            <person name="Cawley S."/>
            <person name="Dahlke C."/>
            <person name="Davenport L.B."/>
            <person name="Davies P."/>
            <person name="de Pablos B."/>
            <person name="Delcher A."/>
            <person name="Deng Z."/>
            <person name="Mays A.D."/>
            <person name="Dew I."/>
            <person name="Dietz S.M."/>
            <person name="Dodson K."/>
            <person name="Doup L.E."/>
            <person name="Downes M."/>
            <person name="Dugan-Rocha S."/>
            <person name="Dunkov B.C."/>
            <person name="Dunn P."/>
            <person name="Durbin K.J."/>
            <person name="Evangelista C.C."/>
            <person name="Ferraz C."/>
            <person name="Ferriera S."/>
            <person name="Fleischmann W."/>
            <person name="Fosler C."/>
            <person name="Gabrielian A.E."/>
            <person name="Garg N.S."/>
            <person name="Gelbart W.M."/>
            <person name="Glasser K."/>
            <person name="Glodek A."/>
            <person name="Gong F."/>
            <person name="Gorrell J.H."/>
            <person name="Gu Z."/>
            <person name="Guan P."/>
            <person name="Harris M."/>
            <person name="Harris N.L."/>
            <person name="Harvey D.A."/>
            <person name="Heiman T.J."/>
            <person name="Hernandez J.R."/>
            <person name="Houck J."/>
            <person name="Hostin D."/>
            <person name="Houston K.A."/>
            <person name="Howland T.J."/>
            <person name="Wei M.-H."/>
            <person name="Ibegwam C."/>
            <person name="Jalali M."/>
            <person name="Kalush F."/>
            <person name="Karpen G.H."/>
            <person name="Ke Z."/>
            <person name="Kennison J.A."/>
            <person name="Ketchum K.A."/>
            <person name="Kimmel B.E."/>
            <person name="Kodira C.D."/>
            <person name="Kraft C.L."/>
            <person name="Kravitz S."/>
            <person name="Kulp D."/>
            <person name="Lai Z."/>
            <person name="Lasko P."/>
            <person name="Lei Y."/>
            <person name="Levitsky A.A."/>
            <person name="Li J.H."/>
            <person name="Li Z."/>
            <person name="Liang Y."/>
            <person name="Lin X."/>
            <person name="Liu X."/>
            <person name="Mattei B."/>
            <person name="McIntosh T.C."/>
            <person name="McLeod M.P."/>
            <person name="McPherson D."/>
            <person name="Merkulov G."/>
            <person name="Milshina N.V."/>
            <person name="Mobarry C."/>
            <person name="Morris J."/>
            <person name="Moshrefi A."/>
            <person name="Mount S.M."/>
            <person name="Moy M."/>
            <person name="Murphy B."/>
            <person name="Murphy L."/>
            <person name="Muzny D.M."/>
            <person name="Nelson D.L."/>
            <person name="Nelson D.R."/>
            <person name="Nelson K.A."/>
            <person name="Nixon K."/>
            <person name="Nusskern D.R."/>
            <person name="Pacleb J.M."/>
            <person name="Palazzolo M."/>
            <person name="Pittman G.S."/>
            <person name="Pan S."/>
            <person name="Pollard J."/>
            <person name="Puri V."/>
            <person name="Reese M.G."/>
            <person name="Reinert K."/>
            <person name="Remington K."/>
            <person name="Saunders R.D.C."/>
            <person name="Scheeler F."/>
            <person name="Shen H."/>
            <person name="Shue B.C."/>
            <person name="Siden-Kiamos I."/>
            <person name="Simpson M."/>
            <person name="Skupski M.P."/>
            <person name="Smith T.J."/>
            <person name="Spier E."/>
            <person name="Spradling A.C."/>
            <person name="Stapleton M."/>
            <person name="Strong R."/>
            <person name="Sun E."/>
            <person name="Svirskas R."/>
            <person name="Tector C."/>
            <person name="Turner R."/>
            <person name="Venter E."/>
            <person name="Wang A.H."/>
            <person name="Wang X."/>
            <person name="Wang Z.-Y."/>
            <person name="Wassarman D.A."/>
            <person name="Weinstock G.M."/>
            <person name="Weissenbach J."/>
            <person name="Williams S.M."/>
            <person name="Woodage T."/>
            <person name="Worley K.C."/>
            <person name="Wu D."/>
            <person name="Yang S."/>
            <person name="Yao Q.A."/>
            <person name="Ye J."/>
            <person name="Yeh R.-F."/>
            <person name="Zaveri J.S."/>
            <person name="Zhan M."/>
            <person name="Zhang G."/>
            <person name="Zhao Q."/>
            <person name="Zheng L."/>
            <person name="Zheng X.H."/>
            <person name="Zhong F.N."/>
            <person name="Zhong W."/>
            <person name="Zhou X."/>
            <person name="Zhu S.C."/>
            <person name="Zhu X."/>
            <person name="Smith H.O."/>
            <person name="Gibbs R.A."/>
            <person name="Myers E.W."/>
            <person name="Rubin G.M."/>
            <person name="Venter J.C."/>
        </authorList>
    </citation>
    <scope>NUCLEOTIDE SEQUENCE [LARGE SCALE GENOMIC DNA]</scope>
    <source>
        <strain>Berkeley</strain>
    </source>
</reference>
<reference evidence="4" key="2">
    <citation type="journal article" date="2002" name="Genome Biol.">
        <title>Annotation of the Drosophila melanogaster euchromatic genome: a systematic review.</title>
        <authorList>
            <person name="Misra S."/>
            <person name="Crosby M.A."/>
            <person name="Mungall C.J."/>
            <person name="Matthews B.B."/>
            <person name="Campbell K.S."/>
            <person name="Hradecky P."/>
            <person name="Huang Y."/>
            <person name="Kaminker J.S."/>
            <person name="Millburn G.H."/>
            <person name="Prochnik S.E."/>
            <person name="Smith C.D."/>
            <person name="Tupy J.L."/>
            <person name="Whitfield E.J."/>
            <person name="Bayraktaroglu L."/>
            <person name="Berman B.P."/>
            <person name="Bettencourt B.R."/>
            <person name="Celniker S.E."/>
            <person name="de Grey A.D.N.J."/>
            <person name="Drysdale R.A."/>
            <person name="Harris N.L."/>
            <person name="Richter J."/>
            <person name="Russo S."/>
            <person name="Schroeder A.J."/>
            <person name="Shu S.Q."/>
            <person name="Stapleton M."/>
            <person name="Yamada C."/>
            <person name="Ashburner M."/>
            <person name="Gelbart W.M."/>
            <person name="Rubin G.M."/>
            <person name="Lewis S.E."/>
        </authorList>
    </citation>
    <scope>GENOME REANNOTATION</scope>
    <source>
        <strain>Berkeley</strain>
    </source>
</reference>
<gene>
    <name type="ORF">CG4372</name>
</gene>
<name>ASPG2_DROME</name>
<sequence length="397" mass="43682">MLAQSCCLRLLILLLLFTTIGSVPKKSLKYFTNRKLRERRIKLFGTKKTEIQSLLISTWNYTDANLQAWSVLQQGPRRTRQAVIQGCMACQNQRCGRLLTGRSSPDTEGALTLEAAIMDGESLEYGAVAGMNGVRNAILVADAVLKYTKHSVLVGKSATKFARSLGYKEEYLTDARTRNVLKKWRSNGCQPNFWRDVHPSPAENCGPYSPLPEHMHQHPMHQEYAIIQGQHDQLAFLALDAEGKFHVASQSSGAQFRIPGRVGDSAVPGAGIYADNEVGGAVASGDGDVLMRHLPAFLAVEAMRAGKEPDKAAELVVQRLLRHNTEFNGAVVVVNRRGIYAAACAGLDEFHFVVSGGKEYLSMARVERVKCLERENEVIDGGPKGLFPTIPEKHKVP</sequence>
<feature type="signal peptide" evidence="3">
    <location>
        <begin position="1"/>
        <end position="22"/>
    </location>
</feature>
<feature type="chain" id="PRO_0000384143" description="L-asparaginase-like protein CG4372">
    <location>
        <begin position="23"/>
        <end position="397"/>
    </location>
</feature>
<feature type="disulfide bond" evidence="2">
    <location>
        <begin position="90"/>
        <end position="95"/>
    </location>
</feature>
<feature type="disulfide bond" evidence="2">
    <location>
        <begin position="189"/>
        <end position="205"/>
    </location>
</feature>
<feature type="disulfide bond" evidence="1">
    <location>
        <begin position="344"/>
        <end position="371"/>
    </location>
</feature>